<reference key="1">
    <citation type="journal article" date="2013" name="Nature">
        <title>The zebrafish reference genome sequence and its relationship to the human genome.</title>
        <authorList>
            <person name="Howe K."/>
            <person name="Clark M.D."/>
            <person name="Torroja C.F."/>
            <person name="Torrance J."/>
            <person name="Berthelot C."/>
            <person name="Muffato M."/>
            <person name="Collins J.E."/>
            <person name="Humphray S."/>
            <person name="McLaren K."/>
            <person name="Matthews L."/>
            <person name="McLaren S."/>
            <person name="Sealy I."/>
            <person name="Caccamo M."/>
            <person name="Churcher C."/>
            <person name="Scott C."/>
            <person name="Barrett J.C."/>
            <person name="Koch R."/>
            <person name="Rauch G.J."/>
            <person name="White S."/>
            <person name="Chow W."/>
            <person name="Kilian B."/>
            <person name="Quintais L.T."/>
            <person name="Guerra-Assuncao J.A."/>
            <person name="Zhou Y."/>
            <person name="Gu Y."/>
            <person name="Yen J."/>
            <person name="Vogel J.H."/>
            <person name="Eyre T."/>
            <person name="Redmond S."/>
            <person name="Banerjee R."/>
            <person name="Chi J."/>
            <person name="Fu B."/>
            <person name="Langley E."/>
            <person name="Maguire S.F."/>
            <person name="Laird G.K."/>
            <person name="Lloyd D."/>
            <person name="Kenyon E."/>
            <person name="Donaldson S."/>
            <person name="Sehra H."/>
            <person name="Almeida-King J."/>
            <person name="Loveland J."/>
            <person name="Trevanion S."/>
            <person name="Jones M."/>
            <person name="Quail M."/>
            <person name="Willey D."/>
            <person name="Hunt A."/>
            <person name="Burton J."/>
            <person name="Sims S."/>
            <person name="McLay K."/>
            <person name="Plumb B."/>
            <person name="Davis J."/>
            <person name="Clee C."/>
            <person name="Oliver K."/>
            <person name="Clark R."/>
            <person name="Riddle C."/>
            <person name="Elliot D."/>
            <person name="Threadgold G."/>
            <person name="Harden G."/>
            <person name="Ware D."/>
            <person name="Begum S."/>
            <person name="Mortimore B."/>
            <person name="Kerry G."/>
            <person name="Heath P."/>
            <person name="Phillimore B."/>
            <person name="Tracey A."/>
            <person name="Corby N."/>
            <person name="Dunn M."/>
            <person name="Johnson C."/>
            <person name="Wood J."/>
            <person name="Clark S."/>
            <person name="Pelan S."/>
            <person name="Griffiths G."/>
            <person name="Smith M."/>
            <person name="Glithero R."/>
            <person name="Howden P."/>
            <person name="Barker N."/>
            <person name="Lloyd C."/>
            <person name="Stevens C."/>
            <person name="Harley J."/>
            <person name="Holt K."/>
            <person name="Panagiotidis G."/>
            <person name="Lovell J."/>
            <person name="Beasley H."/>
            <person name="Henderson C."/>
            <person name="Gordon D."/>
            <person name="Auger K."/>
            <person name="Wright D."/>
            <person name="Collins J."/>
            <person name="Raisen C."/>
            <person name="Dyer L."/>
            <person name="Leung K."/>
            <person name="Robertson L."/>
            <person name="Ambridge K."/>
            <person name="Leongamornlert D."/>
            <person name="McGuire S."/>
            <person name="Gilderthorp R."/>
            <person name="Griffiths C."/>
            <person name="Manthravadi D."/>
            <person name="Nichol S."/>
            <person name="Barker G."/>
            <person name="Whitehead S."/>
            <person name="Kay M."/>
            <person name="Brown J."/>
            <person name="Murnane C."/>
            <person name="Gray E."/>
            <person name="Humphries M."/>
            <person name="Sycamore N."/>
            <person name="Barker D."/>
            <person name="Saunders D."/>
            <person name="Wallis J."/>
            <person name="Babbage A."/>
            <person name="Hammond S."/>
            <person name="Mashreghi-Mohammadi M."/>
            <person name="Barr L."/>
            <person name="Martin S."/>
            <person name="Wray P."/>
            <person name="Ellington A."/>
            <person name="Matthews N."/>
            <person name="Ellwood M."/>
            <person name="Woodmansey R."/>
            <person name="Clark G."/>
            <person name="Cooper J."/>
            <person name="Tromans A."/>
            <person name="Grafham D."/>
            <person name="Skuce C."/>
            <person name="Pandian R."/>
            <person name="Andrews R."/>
            <person name="Harrison E."/>
            <person name="Kimberley A."/>
            <person name="Garnett J."/>
            <person name="Fosker N."/>
            <person name="Hall R."/>
            <person name="Garner P."/>
            <person name="Kelly D."/>
            <person name="Bird C."/>
            <person name="Palmer S."/>
            <person name="Gehring I."/>
            <person name="Berger A."/>
            <person name="Dooley C.M."/>
            <person name="Ersan-Urun Z."/>
            <person name="Eser C."/>
            <person name="Geiger H."/>
            <person name="Geisler M."/>
            <person name="Karotki L."/>
            <person name="Kirn A."/>
            <person name="Konantz J."/>
            <person name="Konantz M."/>
            <person name="Oberlander M."/>
            <person name="Rudolph-Geiger S."/>
            <person name="Teucke M."/>
            <person name="Lanz C."/>
            <person name="Raddatz G."/>
            <person name="Osoegawa K."/>
            <person name="Zhu B."/>
            <person name="Rapp A."/>
            <person name="Widaa S."/>
            <person name="Langford C."/>
            <person name="Yang F."/>
            <person name="Schuster S.C."/>
            <person name="Carter N.P."/>
            <person name="Harrow J."/>
            <person name="Ning Z."/>
            <person name="Herrero J."/>
            <person name="Searle S.M."/>
            <person name="Enright A."/>
            <person name="Geisler R."/>
            <person name="Plasterk R.H."/>
            <person name="Lee C."/>
            <person name="Westerfield M."/>
            <person name="de Jong P.J."/>
            <person name="Zon L.I."/>
            <person name="Postlethwait J.H."/>
            <person name="Nusslein-Volhard C."/>
            <person name="Hubbard T.J."/>
            <person name="Roest Crollius H."/>
            <person name="Rogers J."/>
            <person name="Stemple D.L."/>
        </authorList>
    </citation>
    <scope>NUCLEOTIDE SEQUENCE [LARGE SCALE GENOMIC DNA]</scope>
    <source>
        <strain>Tuebingen</strain>
    </source>
</reference>
<reference key="2">
    <citation type="submission" date="2005-05" db="EMBL/GenBank/DDBJ databases">
        <authorList>
            <consortium name="NIH - Zebrafish Gene Collection (ZGC) project"/>
        </authorList>
    </citation>
    <scope>NUCLEOTIDE SEQUENCE [LARGE SCALE MRNA]</scope>
    <source>
        <tissue>Embryo</tissue>
    </source>
</reference>
<accession>Q5RII9</accession>
<comment type="function">
    <text evidence="2">Catalytic subunit of a complex which severs microtubules in an ATP-dependent manner. Microtubule severing may promote rapid reorganization of cellular microtubule arrays and the release of microtubules from the centrosome following nucleation.</text>
</comment>
<comment type="catalytic activity">
    <reaction evidence="2">
        <text>n ATP + n H2O + a microtubule = n ADP + n phosphate + (n+1) alpha/beta tubulin heterodimers.</text>
        <dbReference type="EC" id="5.6.1.1"/>
    </reaction>
</comment>
<comment type="activity regulation">
    <text evidence="2">ATPase activity is stimulated by microtubules, which promote homooligomerization. ATP-dependent microtubule severing is stimulated by interaction with katnb1.</text>
</comment>
<comment type="subunit">
    <text evidence="2">Can homooligomerize into hexameric rings, which may be promoted by interaction with microtubules. Interacts with katnb1, which may serve as a targeting subunit.</text>
</comment>
<comment type="subcellular location">
    <subcellularLocation>
        <location evidence="2">Cytoplasm</location>
    </subcellularLocation>
    <subcellularLocation>
        <location evidence="2">Cytoplasm</location>
        <location evidence="2">Cytoskeleton</location>
        <location evidence="2">Microtubule organizing center</location>
        <location evidence="2">Centrosome</location>
    </subcellularLocation>
    <subcellularLocation>
        <location evidence="2">Cytoplasm</location>
        <location evidence="2">Cytoskeleton</location>
        <location evidence="2">Spindle pole</location>
    </subcellularLocation>
    <subcellularLocation>
        <location evidence="1">Cytoplasm</location>
        <location evidence="1">Cytoskeleton</location>
        <location evidence="1">Spindle</location>
    </subcellularLocation>
    <text evidence="2">Predominantly cytoplasmic. Also localized to the interphase centrosome and the mitotic spindle poles. Enhanced recruitment to the mitotic spindle poles requires microtubules and interaction with katnb1.</text>
</comment>
<comment type="similarity">
    <text evidence="2">Belongs to the AAA ATPase family. Katanin p60 subunit A1 subfamily.</text>
</comment>
<dbReference type="EC" id="5.6.1.1" evidence="2"/>
<dbReference type="EMBL" id="BX255904">
    <property type="protein sequence ID" value="CAI20705.1"/>
    <property type="molecule type" value="Genomic_DNA"/>
</dbReference>
<dbReference type="EMBL" id="BC095321">
    <property type="protein sequence ID" value="AAH95321.1"/>
    <property type="molecule type" value="mRNA"/>
</dbReference>
<dbReference type="RefSeq" id="NP_001018440.1">
    <property type="nucleotide sequence ID" value="NM_001020604.1"/>
</dbReference>
<dbReference type="RefSeq" id="XP_021324094.1">
    <property type="nucleotide sequence ID" value="XM_021468419.2"/>
</dbReference>
<dbReference type="SMR" id="Q5RII9"/>
<dbReference type="FunCoup" id="Q5RII9">
    <property type="interactions" value="1540"/>
</dbReference>
<dbReference type="STRING" id="7955.ENSDARP00000043315"/>
<dbReference type="PaxDb" id="7955-ENSDARP00000043315"/>
<dbReference type="Ensembl" id="ENSDART00000043316">
    <property type="protein sequence ID" value="ENSDARP00000043315"/>
    <property type="gene ID" value="ENSDARG00000021827"/>
</dbReference>
<dbReference type="GeneID" id="553631"/>
<dbReference type="KEGG" id="dre:553631"/>
<dbReference type="AGR" id="ZFIN:ZDB-GENE-050522-514"/>
<dbReference type="CTD" id="11104"/>
<dbReference type="ZFIN" id="ZDB-GENE-050522-514">
    <property type="gene designation" value="katna1"/>
</dbReference>
<dbReference type="eggNOG" id="KOG0738">
    <property type="taxonomic scope" value="Eukaryota"/>
</dbReference>
<dbReference type="HOGENOM" id="CLU_000688_21_1_1"/>
<dbReference type="InParanoid" id="Q5RII9"/>
<dbReference type="OMA" id="PRDEMHM"/>
<dbReference type="OrthoDB" id="5334845at2759"/>
<dbReference type="PhylomeDB" id="Q5RII9"/>
<dbReference type="TreeFam" id="TF323170"/>
<dbReference type="PRO" id="PR:Q5RII9"/>
<dbReference type="Proteomes" id="UP000000437">
    <property type="component" value="Chromosome 20"/>
</dbReference>
<dbReference type="Bgee" id="ENSDARG00000021827">
    <property type="expression patterns" value="Expressed in mature ovarian follicle and 19 other cell types or tissues"/>
</dbReference>
<dbReference type="GO" id="GO:0005813">
    <property type="term" value="C:centrosome"/>
    <property type="evidence" value="ECO:0007669"/>
    <property type="project" value="UniProtKB-SubCell"/>
</dbReference>
<dbReference type="GO" id="GO:0005737">
    <property type="term" value="C:cytoplasm"/>
    <property type="evidence" value="ECO:0000250"/>
    <property type="project" value="UniProtKB"/>
</dbReference>
<dbReference type="GO" id="GO:0005874">
    <property type="term" value="C:microtubule"/>
    <property type="evidence" value="ECO:0007669"/>
    <property type="project" value="UniProtKB-KW"/>
</dbReference>
<dbReference type="GO" id="GO:0015630">
    <property type="term" value="C:microtubule cytoskeleton"/>
    <property type="evidence" value="ECO:0000318"/>
    <property type="project" value="GO_Central"/>
</dbReference>
<dbReference type="GO" id="GO:0030496">
    <property type="term" value="C:midbody"/>
    <property type="evidence" value="ECO:0000250"/>
    <property type="project" value="UniProtKB"/>
</dbReference>
<dbReference type="GO" id="GO:0097431">
    <property type="term" value="C:mitotic spindle pole"/>
    <property type="evidence" value="ECO:0000250"/>
    <property type="project" value="UniProtKB"/>
</dbReference>
<dbReference type="GO" id="GO:0005819">
    <property type="term" value="C:spindle"/>
    <property type="evidence" value="ECO:0000250"/>
    <property type="project" value="UniProtKB"/>
</dbReference>
<dbReference type="GO" id="GO:0000922">
    <property type="term" value="C:spindle pole"/>
    <property type="evidence" value="ECO:0000250"/>
    <property type="project" value="UniProtKB"/>
</dbReference>
<dbReference type="GO" id="GO:0005524">
    <property type="term" value="F:ATP binding"/>
    <property type="evidence" value="ECO:0007669"/>
    <property type="project" value="UniProtKB-KW"/>
</dbReference>
<dbReference type="GO" id="GO:0016887">
    <property type="term" value="F:ATP hydrolysis activity"/>
    <property type="evidence" value="ECO:0000318"/>
    <property type="project" value="GO_Central"/>
</dbReference>
<dbReference type="GO" id="GO:0008017">
    <property type="term" value="F:microtubule binding"/>
    <property type="evidence" value="ECO:0007669"/>
    <property type="project" value="UniProtKB-UniRule"/>
</dbReference>
<dbReference type="GO" id="GO:0008568">
    <property type="term" value="F:microtubule severing ATPase activity"/>
    <property type="evidence" value="ECO:0007669"/>
    <property type="project" value="UniProtKB-EC"/>
</dbReference>
<dbReference type="GO" id="GO:0048675">
    <property type="term" value="P:axon extension"/>
    <property type="evidence" value="ECO:0000315"/>
    <property type="project" value="ZFIN"/>
</dbReference>
<dbReference type="GO" id="GO:0051301">
    <property type="term" value="P:cell division"/>
    <property type="evidence" value="ECO:0007669"/>
    <property type="project" value="UniProtKB-KW"/>
</dbReference>
<dbReference type="GO" id="GO:0031122">
    <property type="term" value="P:cytoplasmic microtubule organization"/>
    <property type="evidence" value="ECO:0000315"/>
    <property type="project" value="ZFIN"/>
</dbReference>
<dbReference type="GO" id="GO:0051013">
    <property type="term" value="P:microtubule severing"/>
    <property type="evidence" value="ECO:0000318"/>
    <property type="project" value="GO_Central"/>
</dbReference>
<dbReference type="CDD" id="cd21748">
    <property type="entry name" value="Kp60-NTD"/>
    <property type="match status" value="1"/>
</dbReference>
<dbReference type="CDD" id="cd19522">
    <property type="entry name" value="RecA-like_KTNA1"/>
    <property type="match status" value="1"/>
</dbReference>
<dbReference type="FunFam" id="1.10.8.60:FF:000025">
    <property type="entry name" value="Katanin p60 ATPase-containing subunit A1"/>
    <property type="match status" value="1"/>
</dbReference>
<dbReference type="FunFam" id="1.20.58.80:FF:000003">
    <property type="entry name" value="Katanin p60 ATPase-containing subunit A1"/>
    <property type="match status" value="1"/>
</dbReference>
<dbReference type="FunFam" id="3.40.50.300:FF:000159">
    <property type="entry name" value="Katanin p60 ATPase-containing subunit A1"/>
    <property type="match status" value="1"/>
</dbReference>
<dbReference type="Gene3D" id="1.10.8.60">
    <property type="match status" value="1"/>
</dbReference>
<dbReference type="Gene3D" id="3.40.50.300">
    <property type="entry name" value="P-loop containing nucleotide triphosphate hydrolases"/>
    <property type="match status" value="1"/>
</dbReference>
<dbReference type="Gene3D" id="1.20.58.80">
    <property type="entry name" value="Phosphotransferase system, lactose/cellobiose-type IIA subunit"/>
    <property type="match status" value="1"/>
</dbReference>
<dbReference type="HAMAP" id="MF_03023">
    <property type="entry name" value="Katanin_p60_A1"/>
    <property type="match status" value="1"/>
</dbReference>
<dbReference type="InterPro" id="IPR003593">
    <property type="entry name" value="AAA+_ATPase"/>
</dbReference>
<dbReference type="InterPro" id="IPR041569">
    <property type="entry name" value="AAA_lid_3"/>
</dbReference>
<dbReference type="InterPro" id="IPR003959">
    <property type="entry name" value="ATPase_AAA_core"/>
</dbReference>
<dbReference type="InterPro" id="IPR003960">
    <property type="entry name" value="ATPase_AAA_CS"/>
</dbReference>
<dbReference type="InterPro" id="IPR028596">
    <property type="entry name" value="KATNA1"/>
</dbReference>
<dbReference type="InterPro" id="IPR048611">
    <property type="entry name" value="KATNA1_MIT"/>
</dbReference>
<dbReference type="InterPro" id="IPR048612">
    <property type="entry name" value="KTNA1_AAA_dom"/>
</dbReference>
<dbReference type="InterPro" id="IPR050304">
    <property type="entry name" value="MT-severing_AAA_ATPase"/>
</dbReference>
<dbReference type="InterPro" id="IPR027417">
    <property type="entry name" value="P-loop_NTPase"/>
</dbReference>
<dbReference type="InterPro" id="IPR015415">
    <property type="entry name" value="Spast_Vps4_C"/>
</dbReference>
<dbReference type="PANTHER" id="PTHR23074">
    <property type="entry name" value="AAA DOMAIN-CONTAINING"/>
    <property type="match status" value="1"/>
</dbReference>
<dbReference type="PANTHER" id="PTHR23074:SF71">
    <property type="entry name" value="KATANIN P60 ATPASE-CONTAINING SUBUNIT A1"/>
    <property type="match status" value="1"/>
</dbReference>
<dbReference type="Pfam" id="PF00004">
    <property type="entry name" value="AAA"/>
    <property type="match status" value="1"/>
</dbReference>
<dbReference type="Pfam" id="PF17862">
    <property type="entry name" value="AAA_lid_3"/>
    <property type="match status" value="1"/>
</dbReference>
<dbReference type="Pfam" id="PF21126">
    <property type="entry name" value="KATNA1_MIT"/>
    <property type="match status" value="1"/>
</dbReference>
<dbReference type="Pfam" id="PF09336">
    <property type="entry name" value="Vps4_C"/>
    <property type="match status" value="1"/>
</dbReference>
<dbReference type="SMART" id="SM00382">
    <property type="entry name" value="AAA"/>
    <property type="match status" value="1"/>
</dbReference>
<dbReference type="SUPFAM" id="SSF52540">
    <property type="entry name" value="P-loop containing nucleoside triphosphate hydrolases"/>
    <property type="match status" value="1"/>
</dbReference>
<dbReference type="PROSITE" id="PS00674">
    <property type="entry name" value="AAA"/>
    <property type="match status" value="1"/>
</dbReference>
<sequence length="485" mass="54882">MSLGEINENVKLAREYALLGNYSSAVVCYQGVLEQIKKYLYSVRDSSLQQKWQQVWQEINEETKQVREIMTTLESFQMESTPSKPSSFAQDNDIMPVHVEHRSSPCVVRKSSVPYKDSKGHGNRLSVGPRGQARPSPRVANGDKGKPQKSKEKKENPSKPKEDKNKAEAVETEVKRFDRGGEDKDLIDALERDIISQNPNVTWDDIADLEEAKKLLKEAVVLPMWMPEFFKGIRRPWKGVLMVGPPGTGKTLLAKAVATECRTTFFNVSSSTLTSKYRGESEKLVRLLFEMARFYAPTTIFIDEIDSICSRRGTSEEHEASRRVKAELLVQMDGVGGTSENDPSKMVMVLAATNFPWDIDEALRRRLEKRIYIPLPSAKGRVDLLKINLKELDLANDVNMDKIAEQMEGYSGADITNVCRDASLMAMRRRIEGLTPEEIRNLPKDEMHMPTTMEDFETALKKVSKSVSAADLEKYEKWIAEFGSC</sequence>
<evidence type="ECO:0000250" key="1">
    <source>
        <dbReference type="UniProtKB" id="O75449"/>
    </source>
</evidence>
<evidence type="ECO:0000255" key="2">
    <source>
        <dbReference type="HAMAP-Rule" id="MF_03023"/>
    </source>
</evidence>
<evidence type="ECO:0000256" key="3">
    <source>
        <dbReference type="SAM" id="MobiDB-lite"/>
    </source>
</evidence>
<keyword id="KW-0067">ATP-binding</keyword>
<keyword id="KW-0131">Cell cycle</keyword>
<keyword id="KW-0132">Cell division</keyword>
<keyword id="KW-0963">Cytoplasm</keyword>
<keyword id="KW-0206">Cytoskeleton</keyword>
<keyword id="KW-0413">Isomerase</keyword>
<keyword id="KW-0493">Microtubule</keyword>
<keyword id="KW-0498">Mitosis</keyword>
<keyword id="KW-0547">Nucleotide-binding</keyword>
<keyword id="KW-1185">Reference proteome</keyword>
<proteinExistence type="evidence at transcript level"/>
<organism>
    <name type="scientific">Danio rerio</name>
    <name type="common">Zebrafish</name>
    <name type="synonym">Brachydanio rerio</name>
    <dbReference type="NCBI Taxonomy" id="7955"/>
    <lineage>
        <taxon>Eukaryota</taxon>
        <taxon>Metazoa</taxon>
        <taxon>Chordata</taxon>
        <taxon>Craniata</taxon>
        <taxon>Vertebrata</taxon>
        <taxon>Euteleostomi</taxon>
        <taxon>Actinopterygii</taxon>
        <taxon>Neopterygii</taxon>
        <taxon>Teleostei</taxon>
        <taxon>Ostariophysi</taxon>
        <taxon>Cypriniformes</taxon>
        <taxon>Danionidae</taxon>
        <taxon>Danioninae</taxon>
        <taxon>Danio</taxon>
    </lineage>
</organism>
<protein>
    <recommendedName>
        <fullName evidence="2">Katanin p60 ATPase-containing subunit A1</fullName>
        <shortName evidence="2">Katanin p60 subunit A1</shortName>
        <ecNumber evidence="2">5.6.1.1</ecNumber>
    </recommendedName>
    <alternativeName>
        <fullName evidence="2">p60 katanin</fullName>
    </alternativeName>
</protein>
<gene>
    <name type="primary">katna1</name>
    <name type="ORF">si:dkey-15j16.1</name>
    <name type="ORF">zgc:110580</name>
</gene>
<feature type="chain" id="PRO_0000357491" description="Katanin p60 ATPase-containing subunit A1">
    <location>
        <begin position="1"/>
        <end position="485"/>
    </location>
</feature>
<feature type="region of interest" description="Disordered" evidence="3">
    <location>
        <begin position="101"/>
        <end position="173"/>
    </location>
</feature>
<feature type="compositionally biased region" description="Basic and acidic residues" evidence="3">
    <location>
        <begin position="141"/>
        <end position="173"/>
    </location>
</feature>
<feature type="binding site" evidence="2">
    <location>
        <begin position="244"/>
        <end position="251"/>
    </location>
    <ligand>
        <name>ATP</name>
        <dbReference type="ChEBI" id="CHEBI:30616"/>
    </ligand>
</feature>
<name>KTNA1_DANRE</name>